<evidence type="ECO:0000255" key="1">
    <source>
        <dbReference type="HAMAP-Rule" id="MF_00361"/>
    </source>
</evidence>
<reference key="1">
    <citation type="journal article" date="2003" name="Proc. Natl. Acad. Sci. U.S.A.">
        <title>The complete genome sequence of the carcinogenic bacterium Helicobacter hepaticus.</title>
        <authorList>
            <person name="Suerbaum S."/>
            <person name="Josenhans C."/>
            <person name="Sterzenbach T."/>
            <person name="Drescher B."/>
            <person name="Brandt P."/>
            <person name="Bell M."/>
            <person name="Droege M."/>
            <person name="Fartmann B."/>
            <person name="Fischer H.-P."/>
            <person name="Ge Z."/>
            <person name="Hoerster A."/>
            <person name="Holland R."/>
            <person name="Klein K."/>
            <person name="Koenig J."/>
            <person name="Macko L."/>
            <person name="Mendz G.L."/>
            <person name="Nyakatura G."/>
            <person name="Schauer D.B."/>
            <person name="Shen Z."/>
            <person name="Weber J."/>
            <person name="Frosch M."/>
            <person name="Fox J.G."/>
        </authorList>
    </citation>
    <scope>NUCLEOTIDE SEQUENCE [LARGE SCALE GENOMIC DNA]</scope>
    <source>
        <strain>ATCC 51449 / 3B1</strain>
    </source>
</reference>
<accession>Q7VGM5</accession>
<name>NADK_HELHP</name>
<proteinExistence type="inferred from homology"/>
<keyword id="KW-0067">ATP-binding</keyword>
<keyword id="KW-0963">Cytoplasm</keyword>
<keyword id="KW-0418">Kinase</keyword>
<keyword id="KW-0520">NAD</keyword>
<keyword id="KW-0521">NADP</keyword>
<keyword id="KW-0547">Nucleotide-binding</keyword>
<keyword id="KW-1185">Reference proteome</keyword>
<keyword id="KW-0808">Transferase</keyword>
<comment type="function">
    <text evidence="1">Involved in the regulation of the intracellular balance of NAD and NADP, and is a key enzyme in the biosynthesis of NADP. Catalyzes specifically the phosphorylation on 2'-hydroxyl of the adenosine moiety of NAD to yield NADP.</text>
</comment>
<comment type="catalytic activity">
    <reaction evidence="1">
        <text>NAD(+) + ATP = ADP + NADP(+) + H(+)</text>
        <dbReference type="Rhea" id="RHEA:18629"/>
        <dbReference type="ChEBI" id="CHEBI:15378"/>
        <dbReference type="ChEBI" id="CHEBI:30616"/>
        <dbReference type="ChEBI" id="CHEBI:57540"/>
        <dbReference type="ChEBI" id="CHEBI:58349"/>
        <dbReference type="ChEBI" id="CHEBI:456216"/>
        <dbReference type="EC" id="2.7.1.23"/>
    </reaction>
</comment>
<comment type="cofactor">
    <cofactor evidence="1">
        <name>a divalent metal cation</name>
        <dbReference type="ChEBI" id="CHEBI:60240"/>
    </cofactor>
</comment>
<comment type="subcellular location">
    <subcellularLocation>
        <location evidence="1">Cytoplasm</location>
    </subcellularLocation>
</comment>
<comment type="similarity">
    <text evidence="1">Belongs to the NAD kinase family.</text>
</comment>
<dbReference type="EC" id="2.7.1.23" evidence="1"/>
<dbReference type="EMBL" id="AE017125">
    <property type="protein sequence ID" value="AAP77893.1"/>
    <property type="molecule type" value="Genomic_DNA"/>
</dbReference>
<dbReference type="RefSeq" id="WP_011116136.1">
    <property type="nucleotide sequence ID" value="NC_004917.1"/>
</dbReference>
<dbReference type="SMR" id="Q7VGM5"/>
<dbReference type="STRING" id="235279.HH_1296"/>
<dbReference type="KEGG" id="hhe:HH_1296"/>
<dbReference type="eggNOG" id="COG0061">
    <property type="taxonomic scope" value="Bacteria"/>
</dbReference>
<dbReference type="HOGENOM" id="CLU_008831_0_3_7"/>
<dbReference type="OrthoDB" id="9774737at2"/>
<dbReference type="Proteomes" id="UP000002495">
    <property type="component" value="Chromosome"/>
</dbReference>
<dbReference type="GO" id="GO:0005737">
    <property type="term" value="C:cytoplasm"/>
    <property type="evidence" value="ECO:0007669"/>
    <property type="project" value="UniProtKB-SubCell"/>
</dbReference>
<dbReference type="GO" id="GO:0005524">
    <property type="term" value="F:ATP binding"/>
    <property type="evidence" value="ECO:0007669"/>
    <property type="project" value="UniProtKB-KW"/>
</dbReference>
<dbReference type="GO" id="GO:0046872">
    <property type="term" value="F:metal ion binding"/>
    <property type="evidence" value="ECO:0007669"/>
    <property type="project" value="UniProtKB-UniRule"/>
</dbReference>
<dbReference type="GO" id="GO:0051287">
    <property type="term" value="F:NAD binding"/>
    <property type="evidence" value="ECO:0007669"/>
    <property type="project" value="UniProtKB-ARBA"/>
</dbReference>
<dbReference type="GO" id="GO:0003951">
    <property type="term" value="F:NAD+ kinase activity"/>
    <property type="evidence" value="ECO:0007669"/>
    <property type="project" value="UniProtKB-UniRule"/>
</dbReference>
<dbReference type="GO" id="GO:0019674">
    <property type="term" value="P:NAD metabolic process"/>
    <property type="evidence" value="ECO:0007669"/>
    <property type="project" value="InterPro"/>
</dbReference>
<dbReference type="GO" id="GO:0006741">
    <property type="term" value="P:NADP biosynthetic process"/>
    <property type="evidence" value="ECO:0007669"/>
    <property type="project" value="UniProtKB-UniRule"/>
</dbReference>
<dbReference type="Gene3D" id="3.40.50.10330">
    <property type="entry name" value="Probable inorganic polyphosphate/atp-NAD kinase, domain 1"/>
    <property type="match status" value="1"/>
</dbReference>
<dbReference type="Gene3D" id="2.60.200.30">
    <property type="entry name" value="Probable inorganic polyphosphate/atp-NAD kinase, domain 2"/>
    <property type="match status" value="1"/>
</dbReference>
<dbReference type="HAMAP" id="MF_00361">
    <property type="entry name" value="NAD_kinase"/>
    <property type="match status" value="1"/>
</dbReference>
<dbReference type="InterPro" id="IPR017438">
    <property type="entry name" value="ATP-NAD_kinase_N"/>
</dbReference>
<dbReference type="InterPro" id="IPR017437">
    <property type="entry name" value="ATP-NAD_kinase_PpnK-typ_C"/>
</dbReference>
<dbReference type="InterPro" id="IPR016064">
    <property type="entry name" value="NAD/diacylglycerol_kinase_sf"/>
</dbReference>
<dbReference type="InterPro" id="IPR002504">
    <property type="entry name" value="NADK"/>
</dbReference>
<dbReference type="PANTHER" id="PTHR20275">
    <property type="entry name" value="NAD KINASE"/>
    <property type="match status" value="1"/>
</dbReference>
<dbReference type="PANTHER" id="PTHR20275:SF0">
    <property type="entry name" value="NAD KINASE"/>
    <property type="match status" value="1"/>
</dbReference>
<dbReference type="Pfam" id="PF01513">
    <property type="entry name" value="NAD_kinase"/>
    <property type="match status" value="1"/>
</dbReference>
<dbReference type="Pfam" id="PF20143">
    <property type="entry name" value="NAD_kinase_C"/>
    <property type="match status" value="1"/>
</dbReference>
<dbReference type="SUPFAM" id="SSF111331">
    <property type="entry name" value="NAD kinase/diacylglycerol kinase-like"/>
    <property type="match status" value="1"/>
</dbReference>
<feature type="chain" id="PRO_0000229644" description="NAD kinase">
    <location>
        <begin position="1"/>
        <end position="301"/>
    </location>
</feature>
<feature type="active site" description="Proton acceptor" evidence="1">
    <location>
        <position position="73"/>
    </location>
</feature>
<feature type="binding site" evidence="1">
    <location>
        <begin position="73"/>
        <end position="74"/>
    </location>
    <ligand>
        <name>NAD(+)</name>
        <dbReference type="ChEBI" id="CHEBI:57540"/>
    </ligand>
</feature>
<feature type="binding site" evidence="1">
    <location>
        <begin position="160"/>
        <end position="161"/>
    </location>
    <ligand>
        <name>NAD(+)</name>
        <dbReference type="ChEBI" id="CHEBI:57540"/>
    </ligand>
</feature>
<feature type="binding site" evidence="1">
    <location>
        <position position="188"/>
    </location>
    <ligand>
        <name>NAD(+)</name>
        <dbReference type="ChEBI" id="CHEBI:57540"/>
    </ligand>
</feature>
<feature type="binding site" evidence="1">
    <location>
        <position position="190"/>
    </location>
    <ligand>
        <name>NAD(+)</name>
        <dbReference type="ChEBI" id="CHEBI:57540"/>
    </ligand>
</feature>
<feature type="binding site" evidence="1">
    <location>
        <position position="198"/>
    </location>
    <ligand>
        <name>NAD(+)</name>
        <dbReference type="ChEBI" id="CHEBI:57540"/>
    </ligand>
</feature>
<feature type="binding site" evidence="1">
    <location>
        <begin position="201"/>
        <end position="206"/>
    </location>
    <ligand>
        <name>NAD(+)</name>
        <dbReference type="ChEBI" id="CHEBI:57540"/>
    </ligand>
</feature>
<feature type="binding site" evidence="1">
    <location>
        <position position="225"/>
    </location>
    <ligand>
        <name>NAD(+)</name>
        <dbReference type="ChEBI" id="CHEBI:57540"/>
    </ligand>
</feature>
<feature type="binding site" evidence="1">
    <location>
        <position position="257"/>
    </location>
    <ligand>
        <name>NAD(+)</name>
        <dbReference type="ChEBI" id="CHEBI:57540"/>
    </ligand>
</feature>
<sequence length="301" mass="33777">MKSHNAPITKVGVILRPSSPELKTTFLQIKEELNNAGIEVILESISGGMIELLGRDFHQLATQCDALFSLGGDGTLISMLRRAFEYELPCMGINTGRLGFLTALMPQNLHTFTSHLKSGDYTLQKHLVLQARIYSTLNTAYENNLDNKNQTPTQTLIAINEFLISKHELSGMVHIDASIDRKYFNTYRCDGLIIGTPAGSTAYNISAGGSVIYPYCRNILLTPIAPHSLTQRPLVLSDEFMLEFYAKERAKLIIDGQEMIDIMPSDRVQIQALPQSAMLMYPPTRDYFSVLKEKFKWGEEH</sequence>
<protein>
    <recommendedName>
        <fullName evidence="1">NAD kinase</fullName>
        <ecNumber evidence="1">2.7.1.23</ecNumber>
    </recommendedName>
    <alternativeName>
        <fullName evidence="1">ATP-dependent NAD kinase</fullName>
    </alternativeName>
</protein>
<organism>
    <name type="scientific">Helicobacter hepaticus (strain ATCC 51449 / 3B1)</name>
    <dbReference type="NCBI Taxonomy" id="235279"/>
    <lineage>
        <taxon>Bacteria</taxon>
        <taxon>Pseudomonadati</taxon>
        <taxon>Campylobacterota</taxon>
        <taxon>Epsilonproteobacteria</taxon>
        <taxon>Campylobacterales</taxon>
        <taxon>Helicobacteraceae</taxon>
        <taxon>Helicobacter</taxon>
    </lineage>
</organism>
<gene>
    <name evidence="1" type="primary">nadK</name>
    <name type="ordered locus">HH_1296</name>
</gene>